<protein>
    <recommendedName>
        <fullName>Polyubiquitin</fullName>
    </recommendedName>
    <component>
        <recommendedName>
            <fullName>Ubiquitin</fullName>
        </recommendedName>
    </component>
</protein>
<keyword id="KW-0963">Cytoplasm</keyword>
<keyword id="KW-1017">Isopeptide bond</keyword>
<keyword id="KW-0539">Nucleus</keyword>
<keyword id="KW-1185">Reference proteome</keyword>
<keyword id="KW-0677">Repeat</keyword>
<keyword id="KW-0832">Ubl conjugation</keyword>
<accession>P0CG70</accession>
<accession>P13117</accession>
<accession>Q7RVR9</accession>
<accession>Q7RVX5</accession>
<accession>Q7RWD8</accession>
<gene>
    <name type="primary">ubi</name>
    <name type="ORF">NCU05995</name>
</gene>
<sequence>MQIFVKTLTGKTITLEVESSDTIDNVKQKIQDKEGIPPDQQRLIFAGKQLEDGRTLSDYNIQKESTLHLVLRLRGGMQIFVKTLTGKTITLEVESSDTIDNVKQKIQDKEGIPPDQQRLIFAGKQLEDGRTLSDYNIQKESTLHLVLRLRGGMQIFVKTLTGKTITLEVESSDTIDNVKQKIQDKEGIPPDQQRLIFAGKQLEDGRTLSDYNIQKESTLHLVLRLRGGMQIFVKTLTGKTITLEVESSDTIDNVKQKIQDKEGIPPDQQRLIFAGKQLEDGRTLSDYNIQKESTLHLVLRLRGGQ</sequence>
<dbReference type="EMBL" id="X13140">
    <property type="protein sequence ID" value="CAA31530.1"/>
    <property type="molecule type" value="Genomic_DNA"/>
</dbReference>
<dbReference type="EMBL" id="CM002241">
    <property type="protein sequence ID" value="EAA29567.1"/>
    <property type="molecule type" value="Genomic_DNA"/>
</dbReference>
<dbReference type="PIR" id="S05323">
    <property type="entry name" value="UQNC"/>
</dbReference>
<dbReference type="RefSeq" id="XP_958803.1">
    <property type="nucleotide sequence ID" value="XM_953710.3"/>
</dbReference>
<dbReference type="SMR" id="P0CG70"/>
<dbReference type="FunCoup" id="P0CG70">
    <property type="interactions" value="616"/>
</dbReference>
<dbReference type="STRING" id="367110.P0CG70"/>
<dbReference type="PaxDb" id="5141-EFNCRP00000001633"/>
<dbReference type="EnsemblFungi" id="EAA29567">
    <property type="protein sequence ID" value="EAA29567"/>
    <property type="gene ID" value="NCU05995"/>
</dbReference>
<dbReference type="GeneID" id="3874950"/>
<dbReference type="KEGG" id="ncr:NCU05995"/>
<dbReference type="VEuPathDB" id="FungiDB:NCU05995"/>
<dbReference type="HOGENOM" id="CLU_010412_7_0_1"/>
<dbReference type="InParanoid" id="P0CG70"/>
<dbReference type="OrthoDB" id="428577at2759"/>
<dbReference type="Proteomes" id="UP000001805">
    <property type="component" value="Chromosome 5, Linkage Group VI"/>
</dbReference>
<dbReference type="GO" id="GO:0005737">
    <property type="term" value="C:cytoplasm"/>
    <property type="evidence" value="ECO:0000318"/>
    <property type="project" value="GO_Central"/>
</dbReference>
<dbReference type="GO" id="GO:0005634">
    <property type="term" value="C:nucleus"/>
    <property type="evidence" value="ECO:0000318"/>
    <property type="project" value="GO_Central"/>
</dbReference>
<dbReference type="GO" id="GO:0031386">
    <property type="term" value="F:protein tag activity"/>
    <property type="evidence" value="ECO:0000318"/>
    <property type="project" value="GO_Central"/>
</dbReference>
<dbReference type="GO" id="GO:0031625">
    <property type="term" value="F:ubiquitin protein ligase binding"/>
    <property type="evidence" value="ECO:0000318"/>
    <property type="project" value="GO_Central"/>
</dbReference>
<dbReference type="GO" id="GO:0019941">
    <property type="term" value="P:modification-dependent protein catabolic process"/>
    <property type="evidence" value="ECO:0000318"/>
    <property type="project" value="GO_Central"/>
</dbReference>
<dbReference type="GO" id="GO:0016567">
    <property type="term" value="P:protein ubiquitination"/>
    <property type="evidence" value="ECO:0000318"/>
    <property type="project" value="GO_Central"/>
</dbReference>
<dbReference type="CDD" id="cd01803">
    <property type="entry name" value="Ubl_ubiquitin"/>
    <property type="match status" value="4"/>
</dbReference>
<dbReference type="FunFam" id="3.10.20.90:FF:000004">
    <property type="entry name" value="Polyubiquitin Ubiquitin"/>
    <property type="match status" value="1"/>
</dbReference>
<dbReference type="FunFam" id="3.10.20.90:FF:000014">
    <property type="entry name" value="Ubiquitin-60S ribosomal L40 fusion"/>
    <property type="match status" value="3"/>
</dbReference>
<dbReference type="Gene3D" id="3.10.20.90">
    <property type="entry name" value="Phosphatidylinositol 3-kinase Catalytic Subunit, Chain A, domain 1"/>
    <property type="match status" value="4"/>
</dbReference>
<dbReference type="InterPro" id="IPR000626">
    <property type="entry name" value="Ubiquitin-like_dom"/>
</dbReference>
<dbReference type="InterPro" id="IPR029071">
    <property type="entry name" value="Ubiquitin-like_domsf"/>
</dbReference>
<dbReference type="InterPro" id="IPR019954">
    <property type="entry name" value="Ubiquitin_CS"/>
</dbReference>
<dbReference type="InterPro" id="IPR019956">
    <property type="entry name" value="Ubiquitin_dom"/>
</dbReference>
<dbReference type="InterPro" id="IPR050158">
    <property type="entry name" value="Ubiquitin_ubiquitin-like"/>
</dbReference>
<dbReference type="PANTHER" id="PTHR10666">
    <property type="entry name" value="UBIQUITIN"/>
    <property type="match status" value="1"/>
</dbReference>
<dbReference type="Pfam" id="PF00240">
    <property type="entry name" value="ubiquitin"/>
    <property type="match status" value="4"/>
</dbReference>
<dbReference type="PRINTS" id="PR00348">
    <property type="entry name" value="UBIQUITIN"/>
</dbReference>
<dbReference type="SMART" id="SM00213">
    <property type="entry name" value="UBQ"/>
    <property type="match status" value="4"/>
</dbReference>
<dbReference type="SUPFAM" id="SSF54236">
    <property type="entry name" value="Ubiquitin-like"/>
    <property type="match status" value="4"/>
</dbReference>
<dbReference type="PROSITE" id="PS00299">
    <property type="entry name" value="UBIQUITIN_1"/>
    <property type="match status" value="4"/>
</dbReference>
<dbReference type="PROSITE" id="PS50053">
    <property type="entry name" value="UBIQUITIN_2"/>
    <property type="match status" value="4"/>
</dbReference>
<proteinExistence type="inferred from homology"/>
<comment type="function">
    <text evidence="1">Ubiquitin exists either covalently attached to another protein, or free (unanchored). When covalently bound, it is conjugated to target proteins via an isopeptide bond either as a monomer (monoubiquitin), a polymer linked via different Lys residues of the ubiquitin (polyubiquitin chains) or a linear polymer linked via the initiator Met of the ubiquitin (linear polyubiquitin chains). Polyubiquitin chains, when attached to a target protein, have different functions depending on the Lys residue of the ubiquitin that is linked: Lys-6-linked may be involved in DNA repair; Lys-11-linked is involved in ERAD (endoplasmic reticulum-associated degradation) and in cell-cycle regulation; Lys-29-linked is involved in lysosomal degradation; Lys-33-linked is involved in kinase modification; Lys-48-linked is involved in protein degradation via the proteasome; Lys-63-linked is involved in endocytosis, and DNA-damage responses. Linear polymer chains formed via attachment by the initiator Met lead to cell signaling. Ubiquitin is usually conjugated to Lys residues of target proteins, however, in rare cases, conjugation to Cys or Ser residues has been observed. When polyubiquitin is free (unanchored-polyubiquitin), it also has distinct roles, such as in activation of protein kinases, and in signaling (By similarity).</text>
</comment>
<comment type="subcellular location">
    <subcellularLocation>
        <location evidence="1">Cytoplasm</location>
    </subcellularLocation>
    <subcellularLocation>
        <location evidence="1">Nucleus</location>
    </subcellularLocation>
</comment>
<comment type="miscellaneous">
    <text evidence="5">Ubiquitin is encoded by 3 different genes. Crp-79 is synthesized as a polyprotein with one copy of ubiquitin fused to ribosomal protein eL40. Crp-6/ubi-3 is a polyprotein with one copy of ubiquitin fused to ribosomal protein eS31. Ubi is a polyprotein containing 4 exact head to tail repeats of ubiquitin.</text>
</comment>
<comment type="miscellaneous">
    <text evidence="5">For the sake of clarity sequence features are annotated only for the first chain, and are not repeated for each of the following chains.</text>
</comment>
<comment type="similarity">
    <text evidence="5">Belongs to the ubiquitin family.</text>
</comment>
<name>UBI4P_NEUCR</name>
<evidence type="ECO:0000250" key="1"/>
<evidence type="ECO:0000250" key="2">
    <source>
        <dbReference type="UniProtKB" id="P0CG47"/>
    </source>
</evidence>
<evidence type="ECO:0000250" key="3">
    <source>
        <dbReference type="UniProtKB" id="P0CG63"/>
    </source>
</evidence>
<evidence type="ECO:0000255" key="4">
    <source>
        <dbReference type="PROSITE-ProRule" id="PRU00214"/>
    </source>
</evidence>
<evidence type="ECO:0000305" key="5"/>
<organism>
    <name type="scientific">Neurospora crassa (strain ATCC 24698 / 74-OR23-1A / CBS 708.71 / DSM 1257 / FGSC 987)</name>
    <dbReference type="NCBI Taxonomy" id="367110"/>
    <lineage>
        <taxon>Eukaryota</taxon>
        <taxon>Fungi</taxon>
        <taxon>Dikarya</taxon>
        <taxon>Ascomycota</taxon>
        <taxon>Pezizomycotina</taxon>
        <taxon>Sordariomycetes</taxon>
        <taxon>Sordariomycetidae</taxon>
        <taxon>Sordariales</taxon>
        <taxon>Sordariaceae</taxon>
        <taxon>Neurospora</taxon>
    </lineage>
</organism>
<feature type="chain" id="PRO_0000396295" description="Ubiquitin">
    <location>
        <begin position="1"/>
        <end position="76"/>
    </location>
</feature>
<feature type="chain" id="PRO_0000396296" description="Ubiquitin">
    <location>
        <begin position="77"/>
        <end position="152"/>
    </location>
</feature>
<feature type="chain" id="PRO_0000396297" description="Ubiquitin">
    <location>
        <begin position="153"/>
        <end position="228"/>
    </location>
</feature>
<feature type="chain" id="PRO_0000396298" description="Ubiquitin">
    <location>
        <begin position="229"/>
        <end position="304"/>
    </location>
</feature>
<feature type="propeptide" id="PRO_0000396299">
    <location>
        <position position="305"/>
    </location>
</feature>
<feature type="domain" description="Ubiquitin-like 1" evidence="4">
    <location>
        <begin position="1"/>
        <end position="76"/>
    </location>
</feature>
<feature type="domain" description="Ubiquitin-like 2" evidence="4">
    <location>
        <begin position="77"/>
        <end position="152"/>
    </location>
</feature>
<feature type="domain" description="Ubiquitin-like 3" evidence="4">
    <location>
        <begin position="153"/>
        <end position="228"/>
    </location>
</feature>
<feature type="domain" description="Ubiquitin-like 4" evidence="4">
    <location>
        <begin position="229"/>
        <end position="304"/>
    </location>
</feature>
<feature type="cross-link" description="Glycyl lysine isopeptide (Lys-Gly) (interchain with G-Cter in ubiquitin)" evidence="2">
    <location>
        <position position="6"/>
    </location>
</feature>
<feature type="cross-link" description="Glycyl lysine isopeptide (Lys-Gly) (interchain with G-Cter in ubiquitin)" evidence="2">
    <location>
        <position position="11"/>
    </location>
</feature>
<feature type="cross-link" description="Glycyl lysine isopeptide (Lys-Gly) (interchain with G-Cter in ubiquitin)" evidence="2">
    <location>
        <position position="27"/>
    </location>
</feature>
<feature type="cross-link" description="Glycyl lysine isopeptide (Lys-Gly) (interchain with G-Cter in ubiquitin)" evidence="2">
    <location>
        <position position="29"/>
    </location>
</feature>
<feature type="cross-link" description="Glycyl lysine isopeptide (Lys-Gly) (interchain with G-Cter in ubiquitin)" evidence="2">
    <location>
        <position position="33"/>
    </location>
</feature>
<feature type="cross-link" description="Glycyl lysine isopeptide (Lys-Gly) (interchain with G-Cter in ubiquitin)" evidence="3">
    <location>
        <position position="48"/>
    </location>
</feature>
<feature type="cross-link" description="Glycyl lysine isopeptide (Lys-Gly) (interchain with G-Cter in ubiquitin)" evidence="2">
    <location>
        <position position="63"/>
    </location>
</feature>
<feature type="cross-link" description="Glycyl lysine isopeptide (Gly-Lys) (interchain with K-? in acceptor proteins)" evidence="4">
    <location>
        <position position="76"/>
    </location>
</feature>
<reference key="1">
    <citation type="journal article" date="1989" name="Nucleic Acids Res.">
        <title>Ubiquitin expression in Neurospora crassa: cloning and sequencing of a polyubiquitin gene.</title>
        <authorList>
            <person name="Taccioli G.E."/>
            <person name="Grotewold E."/>
            <person name="Aisemberg G.O."/>
            <person name="Judewicz N.D."/>
        </authorList>
    </citation>
    <scope>NUCLEOTIDE SEQUENCE [GENOMIC DNA]</scope>
    <source>
        <strain>74-ORS-6a / FGSC 4200</strain>
    </source>
</reference>
<reference key="2">
    <citation type="journal article" date="2003" name="Nature">
        <title>The genome sequence of the filamentous fungus Neurospora crassa.</title>
        <authorList>
            <person name="Galagan J.E."/>
            <person name="Calvo S.E."/>
            <person name="Borkovich K.A."/>
            <person name="Selker E.U."/>
            <person name="Read N.D."/>
            <person name="Jaffe D.B."/>
            <person name="FitzHugh W."/>
            <person name="Ma L.-J."/>
            <person name="Smirnov S."/>
            <person name="Purcell S."/>
            <person name="Rehman B."/>
            <person name="Elkins T."/>
            <person name="Engels R."/>
            <person name="Wang S."/>
            <person name="Nielsen C.B."/>
            <person name="Butler J."/>
            <person name="Endrizzi M."/>
            <person name="Qui D."/>
            <person name="Ianakiev P."/>
            <person name="Bell-Pedersen D."/>
            <person name="Nelson M.A."/>
            <person name="Werner-Washburne M."/>
            <person name="Selitrennikoff C.P."/>
            <person name="Kinsey J.A."/>
            <person name="Braun E.L."/>
            <person name="Zelter A."/>
            <person name="Schulte U."/>
            <person name="Kothe G.O."/>
            <person name="Jedd G."/>
            <person name="Mewes H.-W."/>
            <person name="Staben C."/>
            <person name="Marcotte E."/>
            <person name="Greenberg D."/>
            <person name="Roy A."/>
            <person name="Foley K."/>
            <person name="Naylor J."/>
            <person name="Stange-Thomann N."/>
            <person name="Barrett R."/>
            <person name="Gnerre S."/>
            <person name="Kamal M."/>
            <person name="Kamvysselis M."/>
            <person name="Mauceli E.W."/>
            <person name="Bielke C."/>
            <person name="Rudd S."/>
            <person name="Frishman D."/>
            <person name="Krystofova S."/>
            <person name="Rasmussen C."/>
            <person name="Metzenberg R.L."/>
            <person name="Perkins D.D."/>
            <person name="Kroken S."/>
            <person name="Cogoni C."/>
            <person name="Macino G."/>
            <person name="Catcheside D.E.A."/>
            <person name="Li W."/>
            <person name="Pratt R.J."/>
            <person name="Osmani S.A."/>
            <person name="DeSouza C.P.C."/>
            <person name="Glass N.L."/>
            <person name="Orbach M.J."/>
            <person name="Berglund J.A."/>
            <person name="Voelker R."/>
            <person name="Yarden O."/>
            <person name="Plamann M."/>
            <person name="Seiler S."/>
            <person name="Dunlap J.C."/>
            <person name="Radford A."/>
            <person name="Aramayo R."/>
            <person name="Natvig D.O."/>
            <person name="Alex L.A."/>
            <person name="Mannhaupt G."/>
            <person name="Ebbole D.J."/>
            <person name="Freitag M."/>
            <person name="Paulsen I."/>
            <person name="Sachs M.S."/>
            <person name="Lander E.S."/>
            <person name="Nusbaum C."/>
            <person name="Birren B.W."/>
        </authorList>
    </citation>
    <scope>NUCLEOTIDE SEQUENCE [LARGE SCALE GENOMIC DNA]</scope>
    <source>
        <strain>ATCC 24698 / 74-OR23-1A / CBS 708.71 / DSM 1257 / FGSC 987</strain>
    </source>
</reference>